<comment type="function">
    <text evidence="2">Catalyzes the hydrolysis of N(4)-acetylcytidine (ac4C).</text>
</comment>
<comment type="catalytic activity">
    <reaction evidence="2">
        <text>N(4)-acetylcytidine + H2O = cytidine + acetate + H(+)</text>
        <dbReference type="Rhea" id="RHEA:62932"/>
        <dbReference type="ChEBI" id="CHEBI:15377"/>
        <dbReference type="ChEBI" id="CHEBI:15378"/>
        <dbReference type="ChEBI" id="CHEBI:17562"/>
        <dbReference type="ChEBI" id="CHEBI:30089"/>
        <dbReference type="ChEBI" id="CHEBI:70989"/>
        <dbReference type="EC" id="3.5.1.135"/>
    </reaction>
</comment>
<comment type="catalytic activity">
    <reaction evidence="2">
        <text>N(4)-acetyl-2'-deoxycytidine + H2O = 2'-deoxycytidine + acetate + H(+)</text>
        <dbReference type="Rhea" id="RHEA:62936"/>
        <dbReference type="ChEBI" id="CHEBI:15377"/>
        <dbReference type="ChEBI" id="CHEBI:15378"/>
        <dbReference type="ChEBI" id="CHEBI:15698"/>
        <dbReference type="ChEBI" id="CHEBI:30089"/>
        <dbReference type="ChEBI" id="CHEBI:146133"/>
        <dbReference type="EC" id="3.5.1.135"/>
    </reaction>
</comment>
<comment type="catalytic activity">
    <reaction evidence="2">
        <text>N(4)-acetylcytosine + H2O = cytosine + acetate + H(+)</text>
        <dbReference type="Rhea" id="RHEA:62940"/>
        <dbReference type="ChEBI" id="CHEBI:15377"/>
        <dbReference type="ChEBI" id="CHEBI:15378"/>
        <dbReference type="ChEBI" id="CHEBI:16040"/>
        <dbReference type="ChEBI" id="CHEBI:30089"/>
        <dbReference type="ChEBI" id="CHEBI:146134"/>
        <dbReference type="EC" id="3.5.1.135"/>
    </reaction>
</comment>
<comment type="similarity">
    <text evidence="2">Belongs to the N(4)-acetylcytidine amidohydrolase family.</text>
</comment>
<gene>
    <name type="primary">yqfB</name>
    <name type="ordered locus">SeD_A3387</name>
</gene>
<keyword id="KW-0378">Hydrolase</keyword>
<evidence type="ECO:0000255" key="1"/>
<evidence type="ECO:0000255" key="2">
    <source>
        <dbReference type="HAMAP-Rule" id="MF_00684"/>
    </source>
</evidence>
<sequence length="104" mass="12084">MQPNDITFFQRFQNDILAGRKTITIRDVSESHFKAGDVLRVGRFEDDGYFCTIEVTGTSTVTLDTLNEKHAQQENMSLDELKRVIAEIYPNQTQFYVIDFKCLR</sequence>
<reference key="1">
    <citation type="journal article" date="2011" name="J. Bacteriol.">
        <title>Comparative genomics of 28 Salmonella enterica isolates: evidence for CRISPR-mediated adaptive sublineage evolution.</title>
        <authorList>
            <person name="Fricke W.F."/>
            <person name="Mammel M.K."/>
            <person name="McDermott P.F."/>
            <person name="Tartera C."/>
            <person name="White D.G."/>
            <person name="Leclerc J.E."/>
            <person name="Ravel J."/>
            <person name="Cebula T.A."/>
        </authorList>
    </citation>
    <scope>NUCLEOTIDE SEQUENCE [LARGE SCALE GENOMIC DNA]</scope>
    <source>
        <strain>CT_02021853</strain>
    </source>
</reference>
<proteinExistence type="inferred from homology"/>
<feature type="chain" id="PRO_1000131793" description="N(4)-acetylcytidine amidohydrolase">
    <location>
        <begin position="1"/>
        <end position="104"/>
    </location>
</feature>
<feature type="domain" description="ASCH" evidence="1">
    <location>
        <begin position="6"/>
        <end position="94"/>
    </location>
</feature>
<feature type="active site" description="Proton acceptor" evidence="2">
    <location>
        <position position="21"/>
    </location>
</feature>
<feature type="active site" description="Nucleophile" evidence="2">
    <location>
        <position position="24"/>
    </location>
</feature>
<feature type="active site" description="Proton donor" evidence="2">
    <location>
        <position position="74"/>
    </location>
</feature>
<organism>
    <name type="scientific">Salmonella dublin (strain CT_02021853)</name>
    <dbReference type="NCBI Taxonomy" id="439851"/>
    <lineage>
        <taxon>Bacteria</taxon>
        <taxon>Pseudomonadati</taxon>
        <taxon>Pseudomonadota</taxon>
        <taxon>Gammaproteobacteria</taxon>
        <taxon>Enterobacterales</taxon>
        <taxon>Enterobacteriaceae</taxon>
        <taxon>Salmonella</taxon>
    </lineage>
</organism>
<accession>B5FUG3</accession>
<protein>
    <recommendedName>
        <fullName evidence="2">N(4)-acetylcytidine amidohydrolase</fullName>
        <shortName evidence="2">ac4C amidohydrolase</shortName>
        <ecNumber evidence="2">3.5.1.135</ecNumber>
    </recommendedName>
</protein>
<dbReference type="EC" id="3.5.1.135" evidence="2"/>
<dbReference type="EMBL" id="CP001144">
    <property type="protein sequence ID" value="ACH74902.1"/>
    <property type="molecule type" value="Genomic_DNA"/>
</dbReference>
<dbReference type="RefSeq" id="WP_001182980.1">
    <property type="nucleotide sequence ID" value="NC_011205.1"/>
</dbReference>
<dbReference type="SMR" id="B5FUG3"/>
<dbReference type="KEGG" id="sed:SeD_A3387"/>
<dbReference type="HOGENOM" id="CLU_152586_0_0_6"/>
<dbReference type="Proteomes" id="UP000008322">
    <property type="component" value="Chromosome"/>
</dbReference>
<dbReference type="GO" id="GO:0005829">
    <property type="term" value="C:cytosol"/>
    <property type="evidence" value="ECO:0007669"/>
    <property type="project" value="TreeGrafter"/>
</dbReference>
<dbReference type="GO" id="GO:0016813">
    <property type="term" value="F:hydrolase activity, acting on carbon-nitrogen (but not peptide) bonds, in linear amidines"/>
    <property type="evidence" value="ECO:0007669"/>
    <property type="project" value="UniProtKB-UniRule"/>
</dbReference>
<dbReference type="GO" id="GO:0106251">
    <property type="term" value="F:N4-acetylcytidine amidohydrolase activity"/>
    <property type="evidence" value="ECO:0007669"/>
    <property type="project" value="RHEA"/>
</dbReference>
<dbReference type="CDD" id="cd06552">
    <property type="entry name" value="ASCH_yqfb_like"/>
    <property type="match status" value="1"/>
</dbReference>
<dbReference type="FunFam" id="2.30.130.30:FF:000001">
    <property type="entry name" value="UPF0267 protein YqfB"/>
    <property type="match status" value="1"/>
</dbReference>
<dbReference type="Gene3D" id="2.30.130.30">
    <property type="entry name" value="Hypothetical protein"/>
    <property type="match status" value="1"/>
</dbReference>
<dbReference type="HAMAP" id="MF_00684">
    <property type="entry name" value="ac4C_amidohydr"/>
    <property type="match status" value="1"/>
</dbReference>
<dbReference type="InterPro" id="IPR008314">
    <property type="entry name" value="AC4CH"/>
</dbReference>
<dbReference type="InterPro" id="IPR007374">
    <property type="entry name" value="ASCH_domain"/>
</dbReference>
<dbReference type="InterPro" id="IPR015947">
    <property type="entry name" value="PUA-like_sf"/>
</dbReference>
<dbReference type="NCBIfam" id="NF003443">
    <property type="entry name" value="PRK04980.1"/>
    <property type="match status" value="1"/>
</dbReference>
<dbReference type="PANTHER" id="PTHR38088">
    <property type="entry name" value="UCP029143 FAMILY PROTEIN"/>
    <property type="match status" value="1"/>
</dbReference>
<dbReference type="PANTHER" id="PTHR38088:SF2">
    <property type="entry name" value="UCP029143 FAMILY PROTEIN"/>
    <property type="match status" value="1"/>
</dbReference>
<dbReference type="Pfam" id="PF04266">
    <property type="entry name" value="ASCH"/>
    <property type="match status" value="1"/>
</dbReference>
<dbReference type="PIRSF" id="PIRSF029143">
    <property type="entry name" value="UCP029143"/>
    <property type="match status" value="1"/>
</dbReference>
<dbReference type="SMART" id="SM01022">
    <property type="entry name" value="ASCH"/>
    <property type="match status" value="1"/>
</dbReference>
<dbReference type="SUPFAM" id="SSF88697">
    <property type="entry name" value="PUA domain-like"/>
    <property type="match status" value="1"/>
</dbReference>
<name>AC4CH_SALDC</name>